<evidence type="ECO:0000255" key="1">
    <source>
        <dbReference type="HAMAP-Rule" id="MF_01366"/>
    </source>
</evidence>
<evidence type="ECO:0000305" key="2"/>
<accession>Q1R6A9</accession>
<dbReference type="EMBL" id="CP000243">
    <property type="protein sequence ID" value="ABE09105.1"/>
    <property type="status" value="ALT_INIT"/>
    <property type="molecule type" value="Genomic_DNA"/>
</dbReference>
<dbReference type="RefSeq" id="WP_000847559.1">
    <property type="nucleotide sequence ID" value="NZ_CP064825.1"/>
</dbReference>
<dbReference type="SMR" id="Q1R6A9"/>
<dbReference type="GeneID" id="89518067"/>
<dbReference type="KEGG" id="eci:UTI89_C3661"/>
<dbReference type="HOGENOM" id="CLU_082184_2_2_6"/>
<dbReference type="Proteomes" id="UP000001952">
    <property type="component" value="Chromosome"/>
</dbReference>
<dbReference type="GO" id="GO:0022625">
    <property type="term" value="C:cytosolic large ribosomal subunit"/>
    <property type="evidence" value="ECO:0007669"/>
    <property type="project" value="TreeGrafter"/>
</dbReference>
<dbReference type="GO" id="GO:0003729">
    <property type="term" value="F:mRNA binding"/>
    <property type="evidence" value="ECO:0007669"/>
    <property type="project" value="TreeGrafter"/>
</dbReference>
<dbReference type="GO" id="GO:0003735">
    <property type="term" value="F:structural constituent of ribosome"/>
    <property type="evidence" value="ECO:0007669"/>
    <property type="project" value="InterPro"/>
</dbReference>
<dbReference type="GO" id="GO:0017148">
    <property type="term" value="P:negative regulation of translation"/>
    <property type="evidence" value="ECO:0007669"/>
    <property type="project" value="TreeGrafter"/>
</dbReference>
<dbReference type="GO" id="GO:0006412">
    <property type="term" value="P:translation"/>
    <property type="evidence" value="ECO:0007669"/>
    <property type="project" value="UniProtKB-UniRule"/>
</dbReference>
<dbReference type="CDD" id="cd00392">
    <property type="entry name" value="Ribosomal_L13"/>
    <property type="match status" value="1"/>
</dbReference>
<dbReference type="FunFam" id="3.90.1180.10:FF:000001">
    <property type="entry name" value="50S ribosomal protein L13"/>
    <property type="match status" value="1"/>
</dbReference>
<dbReference type="Gene3D" id="3.90.1180.10">
    <property type="entry name" value="Ribosomal protein L13"/>
    <property type="match status" value="1"/>
</dbReference>
<dbReference type="HAMAP" id="MF_01366">
    <property type="entry name" value="Ribosomal_uL13"/>
    <property type="match status" value="1"/>
</dbReference>
<dbReference type="InterPro" id="IPR005822">
    <property type="entry name" value="Ribosomal_uL13"/>
</dbReference>
<dbReference type="InterPro" id="IPR005823">
    <property type="entry name" value="Ribosomal_uL13_bac-type"/>
</dbReference>
<dbReference type="InterPro" id="IPR023563">
    <property type="entry name" value="Ribosomal_uL13_CS"/>
</dbReference>
<dbReference type="InterPro" id="IPR036899">
    <property type="entry name" value="Ribosomal_uL13_sf"/>
</dbReference>
<dbReference type="NCBIfam" id="TIGR01066">
    <property type="entry name" value="rplM_bact"/>
    <property type="match status" value="1"/>
</dbReference>
<dbReference type="PANTHER" id="PTHR11545:SF2">
    <property type="entry name" value="LARGE RIBOSOMAL SUBUNIT PROTEIN UL13M"/>
    <property type="match status" value="1"/>
</dbReference>
<dbReference type="PANTHER" id="PTHR11545">
    <property type="entry name" value="RIBOSOMAL PROTEIN L13"/>
    <property type="match status" value="1"/>
</dbReference>
<dbReference type="Pfam" id="PF00572">
    <property type="entry name" value="Ribosomal_L13"/>
    <property type="match status" value="1"/>
</dbReference>
<dbReference type="PIRSF" id="PIRSF002181">
    <property type="entry name" value="Ribosomal_L13"/>
    <property type="match status" value="1"/>
</dbReference>
<dbReference type="SUPFAM" id="SSF52161">
    <property type="entry name" value="Ribosomal protein L13"/>
    <property type="match status" value="1"/>
</dbReference>
<dbReference type="PROSITE" id="PS00783">
    <property type="entry name" value="RIBOSOMAL_L13"/>
    <property type="match status" value="1"/>
</dbReference>
<protein>
    <recommendedName>
        <fullName evidence="1">Large ribosomal subunit protein uL13</fullName>
    </recommendedName>
    <alternativeName>
        <fullName evidence="2">50S ribosomal protein L13</fullName>
    </alternativeName>
</protein>
<feature type="chain" id="PRO_0000261724" description="Large ribosomal subunit protein uL13">
    <location>
        <begin position="1"/>
        <end position="142"/>
    </location>
</feature>
<gene>
    <name evidence="1" type="primary">rplM</name>
    <name type="ordered locus">UTI89_C3661</name>
</gene>
<proteinExistence type="inferred from homology"/>
<organism>
    <name type="scientific">Escherichia coli (strain UTI89 / UPEC)</name>
    <dbReference type="NCBI Taxonomy" id="364106"/>
    <lineage>
        <taxon>Bacteria</taxon>
        <taxon>Pseudomonadati</taxon>
        <taxon>Pseudomonadota</taxon>
        <taxon>Gammaproteobacteria</taxon>
        <taxon>Enterobacterales</taxon>
        <taxon>Enterobacteriaceae</taxon>
        <taxon>Escherichia</taxon>
    </lineage>
</organism>
<sequence length="142" mass="16019">MKTFTAKPETVKRDWYVVDATGKTLGRLATELARRLRGKHKAEYTPHVDTGDYIIVLNADKVAVTGNKRTDKVYYHHTGHIGGIKQATFEEMIARRPERVIEIAVKGMLPKGPLGRAMFRKLKVYAGNEHNHAAQQPQVLDI</sequence>
<reference key="1">
    <citation type="journal article" date="2006" name="Proc. Natl. Acad. Sci. U.S.A.">
        <title>Identification of genes subject to positive selection in uropathogenic strains of Escherichia coli: a comparative genomics approach.</title>
        <authorList>
            <person name="Chen S.L."/>
            <person name="Hung C.-S."/>
            <person name="Xu J."/>
            <person name="Reigstad C.S."/>
            <person name="Magrini V."/>
            <person name="Sabo A."/>
            <person name="Blasiar D."/>
            <person name="Bieri T."/>
            <person name="Meyer R.R."/>
            <person name="Ozersky P."/>
            <person name="Armstrong J.R."/>
            <person name="Fulton R.S."/>
            <person name="Latreille J.P."/>
            <person name="Spieth J."/>
            <person name="Hooton T.M."/>
            <person name="Mardis E.R."/>
            <person name="Hultgren S.J."/>
            <person name="Gordon J.I."/>
        </authorList>
    </citation>
    <scope>NUCLEOTIDE SEQUENCE [LARGE SCALE GENOMIC DNA]</scope>
    <source>
        <strain>UTI89 / UPEC</strain>
    </source>
</reference>
<comment type="function">
    <text evidence="1">This protein is one of the early assembly proteins of the 50S ribosomal subunit, although it is not seen to bind rRNA by itself. It is important during the early stages of 50S assembly.</text>
</comment>
<comment type="subunit">
    <text evidence="1">Part of the 50S ribosomal subunit.</text>
</comment>
<comment type="similarity">
    <text evidence="1">Belongs to the universal ribosomal protein uL13 family.</text>
</comment>
<comment type="sequence caution" evidence="2">
    <conflict type="erroneous initiation">
        <sequence resource="EMBL-CDS" id="ABE09105"/>
    </conflict>
</comment>
<keyword id="KW-0687">Ribonucleoprotein</keyword>
<keyword id="KW-0689">Ribosomal protein</keyword>
<name>RL13_ECOUT</name>